<organism>
    <name type="scientific">Mycobacterium sp. (strain KMS)</name>
    <dbReference type="NCBI Taxonomy" id="189918"/>
    <lineage>
        <taxon>Bacteria</taxon>
        <taxon>Bacillati</taxon>
        <taxon>Actinomycetota</taxon>
        <taxon>Actinomycetes</taxon>
        <taxon>Mycobacteriales</taxon>
        <taxon>Mycobacteriaceae</taxon>
        <taxon>Mycobacterium</taxon>
    </lineage>
</organism>
<dbReference type="EMBL" id="CP000518">
    <property type="protein sequence ID" value="ABL90250.1"/>
    <property type="molecule type" value="Genomic_DNA"/>
</dbReference>
<dbReference type="SMR" id="A1UBP2"/>
<dbReference type="STRING" id="189918.Mkms_1036"/>
<dbReference type="KEGG" id="mkm:Mkms_1036"/>
<dbReference type="HOGENOM" id="CLU_058591_0_0_11"/>
<dbReference type="OrthoDB" id="9806396at2"/>
<dbReference type="GO" id="GO:0022627">
    <property type="term" value="C:cytosolic small ribosomal subunit"/>
    <property type="evidence" value="ECO:0007669"/>
    <property type="project" value="TreeGrafter"/>
</dbReference>
<dbReference type="GO" id="GO:0003729">
    <property type="term" value="F:mRNA binding"/>
    <property type="evidence" value="ECO:0007669"/>
    <property type="project" value="UniProtKB-UniRule"/>
</dbReference>
<dbReference type="GO" id="GO:0019843">
    <property type="term" value="F:rRNA binding"/>
    <property type="evidence" value="ECO:0007669"/>
    <property type="project" value="UniProtKB-UniRule"/>
</dbReference>
<dbReference type="GO" id="GO:0003735">
    <property type="term" value="F:structural constituent of ribosome"/>
    <property type="evidence" value="ECO:0007669"/>
    <property type="project" value="InterPro"/>
</dbReference>
<dbReference type="GO" id="GO:0006412">
    <property type="term" value="P:translation"/>
    <property type="evidence" value="ECO:0007669"/>
    <property type="project" value="UniProtKB-UniRule"/>
</dbReference>
<dbReference type="CDD" id="cd02412">
    <property type="entry name" value="KH-II_30S_S3"/>
    <property type="match status" value="1"/>
</dbReference>
<dbReference type="FunFam" id="3.30.1140.32:FF:000002">
    <property type="entry name" value="30S ribosomal protein S3"/>
    <property type="match status" value="1"/>
</dbReference>
<dbReference type="FunFam" id="3.30.300.20:FF:000001">
    <property type="entry name" value="30S ribosomal protein S3"/>
    <property type="match status" value="1"/>
</dbReference>
<dbReference type="Gene3D" id="3.30.300.20">
    <property type="match status" value="1"/>
</dbReference>
<dbReference type="Gene3D" id="3.30.1140.32">
    <property type="entry name" value="Ribosomal protein S3, C-terminal domain"/>
    <property type="match status" value="1"/>
</dbReference>
<dbReference type="HAMAP" id="MF_01309_B">
    <property type="entry name" value="Ribosomal_uS3_B"/>
    <property type="match status" value="1"/>
</dbReference>
<dbReference type="InterPro" id="IPR004087">
    <property type="entry name" value="KH_dom"/>
</dbReference>
<dbReference type="InterPro" id="IPR015946">
    <property type="entry name" value="KH_dom-like_a/b"/>
</dbReference>
<dbReference type="InterPro" id="IPR004044">
    <property type="entry name" value="KH_dom_type_2"/>
</dbReference>
<dbReference type="InterPro" id="IPR009019">
    <property type="entry name" value="KH_sf_prok-type"/>
</dbReference>
<dbReference type="InterPro" id="IPR036419">
    <property type="entry name" value="Ribosomal_S3_C_sf"/>
</dbReference>
<dbReference type="InterPro" id="IPR005704">
    <property type="entry name" value="Ribosomal_uS3_bac-typ"/>
</dbReference>
<dbReference type="InterPro" id="IPR001351">
    <property type="entry name" value="Ribosomal_uS3_C"/>
</dbReference>
<dbReference type="InterPro" id="IPR018280">
    <property type="entry name" value="Ribosomal_uS3_CS"/>
</dbReference>
<dbReference type="NCBIfam" id="TIGR01009">
    <property type="entry name" value="rpsC_bact"/>
    <property type="match status" value="1"/>
</dbReference>
<dbReference type="PANTHER" id="PTHR11760">
    <property type="entry name" value="30S/40S RIBOSOMAL PROTEIN S3"/>
    <property type="match status" value="1"/>
</dbReference>
<dbReference type="PANTHER" id="PTHR11760:SF19">
    <property type="entry name" value="SMALL RIBOSOMAL SUBUNIT PROTEIN US3C"/>
    <property type="match status" value="1"/>
</dbReference>
<dbReference type="Pfam" id="PF07650">
    <property type="entry name" value="KH_2"/>
    <property type="match status" value="1"/>
</dbReference>
<dbReference type="Pfam" id="PF00189">
    <property type="entry name" value="Ribosomal_S3_C"/>
    <property type="match status" value="1"/>
</dbReference>
<dbReference type="SMART" id="SM00322">
    <property type="entry name" value="KH"/>
    <property type="match status" value="1"/>
</dbReference>
<dbReference type="SUPFAM" id="SSF54814">
    <property type="entry name" value="Prokaryotic type KH domain (KH-domain type II)"/>
    <property type="match status" value="1"/>
</dbReference>
<dbReference type="SUPFAM" id="SSF54821">
    <property type="entry name" value="Ribosomal protein S3 C-terminal domain"/>
    <property type="match status" value="1"/>
</dbReference>
<dbReference type="PROSITE" id="PS50823">
    <property type="entry name" value="KH_TYPE_2"/>
    <property type="match status" value="1"/>
</dbReference>
<dbReference type="PROSITE" id="PS00548">
    <property type="entry name" value="RIBOSOMAL_S3"/>
    <property type="match status" value="1"/>
</dbReference>
<evidence type="ECO:0000255" key="1">
    <source>
        <dbReference type="HAMAP-Rule" id="MF_01309"/>
    </source>
</evidence>
<evidence type="ECO:0000256" key="2">
    <source>
        <dbReference type="SAM" id="MobiDB-lite"/>
    </source>
</evidence>
<evidence type="ECO:0000305" key="3"/>
<proteinExistence type="inferred from homology"/>
<feature type="chain" id="PRO_0000293831" description="Small ribosomal subunit protein uS3">
    <location>
        <begin position="1"/>
        <end position="287"/>
    </location>
</feature>
<feature type="domain" description="KH type-2" evidence="1">
    <location>
        <begin position="38"/>
        <end position="106"/>
    </location>
</feature>
<feature type="region of interest" description="Disordered" evidence="2">
    <location>
        <begin position="216"/>
        <end position="287"/>
    </location>
</feature>
<feature type="compositionally biased region" description="Low complexity" evidence="2">
    <location>
        <begin position="238"/>
        <end position="287"/>
    </location>
</feature>
<protein>
    <recommendedName>
        <fullName evidence="1">Small ribosomal subunit protein uS3</fullName>
    </recommendedName>
    <alternativeName>
        <fullName evidence="3">30S ribosomal protein S3</fullName>
    </alternativeName>
</protein>
<sequence>MGQKINPHGFRLGITTDWKSRWYADKQYKDYVKEDVAIRRLLATGLERAGIADVEIERTRDRVRVDIHTARPGIVIGRRGTEADRIRADLEKLTKKQVQLNILEVKNPESVAQLVAQGVAEQLSNRVAFRRAMRKAIQSAMRQPNVKGIRVQCSGRLGGAEMSRSEFYREGRVPLHTLRADIDYGLYEAKTTFGRIGVKVWIYKGDIVGGKRELTAAAPAGADRPRRERPSGSRPRRSGASGTTATSTDAGRAASGTQEAPAAAEAAAGTEAAAGAAAETTTQNPGS</sequence>
<keyword id="KW-0687">Ribonucleoprotein</keyword>
<keyword id="KW-0689">Ribosomal protein</keyword>
<keyword id="KW-0694">RNA-binding</keyword>
<keyword id="KW-0699">rRNA-binding</keyword>
<gene>
    <name evidence="1" type="primary">rpsC</name>
    <name type="ordered locus">Mkms_1036</name>
</gene>
<reference key="1">
    <citation type="submission" date="2006-12" db="EMBL/GenBank/DDBJ databases">
        <title>Complete sequence of chromosome of Mycobacterium sp. KMS.</title>
        <authorList>
            <consortium name="US DOE Joint Genome Institute"/>
            <person name="Copeland A."/>
            <person name="Lucas S."/>
            <person name="Lapidus A."/>
            <person name="Barry K."/>
            <person name="Detter J.C."/>
            <person name="Glavina del Rio T."/>
            <person name="Hammon N."/>
            <person name="Israni S."/>
            <person name="Dalin E."/>
            <person name="Tice H."/>
            <person name="Pitluck S."/>
            <person name="Kiss H."/>
            <person name="Brettin T."/>
            <person name="Bruce D."/>
            <person name="Han C."/>
            <person name="Tapia R."/>
            <person name="Gilna P."/>
            <person name="Schmutz J."/>
            <person name="Larimer F."/>
            <person name="Land M."/>
            <person name="Hauser L."/>
            <person name="Kyrpides N."/>
            <person name="Mikhailova N."/>
            <person name="Miller C.D."/>
            <person name="Richardson P."/>
        </authorList>
    </citation>
    <scope>NUCLEOTIDE SEQUENCE [LARGE SCALE GENOMIC DNA]</scope>
    <source>
        <strain>KMS</strain>
    </source>
</reference>
<accession>A1UBP2</accession>
<comment type="function">
    <text evidence="1">Binds the lower part of the 30S subunit head. Binds mRNA in the 70S ribosome, positioning it for translation.</text>
</comment>
<comment type="subunit">
    <text evidence="1">Part of the 30S ribosomal subunit. Forms a tight complex with proteins S10 and S14.</text>
</comment>
<comment type="similarity">
    <text evidence="1">Belongs to the universal ribosomal protein uS3 family.</text>
</comment>
<name>RS3_MYCSK</name>